<accession>Q0T8V0</accession>
<reference key="1">
    <citation type="journal article" date="2006" name="Mol. Microbiol.">
        <title>Role of pathogenicity island-associated integrases in the genome plasticity of uropathogenic Escherichia coli strain 536.</title>
        <authorList>
            <person name="Hochhut B."/>
            <person name="Wilde C."/>
            <person name="Balling G."/>
            <person name="Middendorf B."/>
            <person name="Dobrindt U."/>
            <person name="Brzuszkiewicz E."/>
            <person name="Gottschalk G."/>
            <person name="Carniel E."/>
            <person name="Hacker J."/>
        </authorList>
    </citation>
    <scope>NUCLEOTIDE SEQUENCE [LARGE SCALE GENOMIC DNA]</scope>
    <source>
        <strain>536 / UPEC</strain>
    </source>
</reference>
<sequence length="179" mass="19469">MSSRVLTPDVVGIDALVHDHQTVLAKAEGGVVAVFANNAPAFYAITPARLAELLALEEKLARPGSDVALDDQLYQEPQTAPVAVPMGKFAMYPDWQPDADFIRLAALWGVALREPVTAEELASFIAYWQAEGKVFHHVQWQQKLARSLQIGRASNGGLPKRDVNTVSEPDSQIPPGFRG</sequence>
<proteinExistence type="inferred from homology"/>
<keyword id="KW-0235">DNA replication</keyword>
<keyword id="KW-0238">DNA-binding</keyword>
<keyword id="KW-0639">Primosome</keyword>
<comment type="function">
    <text evidence="1">Involved in the restart of stalled replication forks, which reloads the replicative helicase on sites other than the origin of replication. Can function in multiple replication restart pathways. Displaces ssDNA from a PriB-ssDNA complex. Probably forms a spiral filament on ssDNA.</text>
</comment>
<comment type="subunit">
    <text evidence="1">Homooligomerizes. Interacts with PriB. Component of the replication restart primosome. Primosome assembly occurs via a 'hand-off' mechanism. PriA binds to replication forks, subsequently PriB then DnaT bind; DnaT then displaces ssDNA to generate the helicase loading substrate.</text>
</comment>
<comment type="similarity">
    <text evidence="1">Belongs to the DnaT family.</text>
</comment>
<feature type="chain" id="PRO_1000064464" description="Replication restart protein DnaT">
    <location>
        <begin position="1"/>
        <end position="179"/>
    </location>
</feature>
<feature type="region of interest" description="Disordered" evidence="2">
    <location>
        <begin position="156"/>
        <end position="179"/>
    </location>
</feature>
<protein>
    <recommendedName>
        <fullName evidence="1">Replication restart protein DnaT</fullName>
    </recommendedName>
</protein>
<dbReference type="EMBL" id="CP000247">
    <property type="protein sequence ID" value="ABG72629.1"/>
    <property type="molecule type" value="Genomic_DNA"/>
</dbReference>
<dbReference type="RefSeq" id="WP_001298056.1">
    <property type="nucleotide sequence ID" value="NC_008253.1"/>
</dbReference>
<dbReference type="SMR" id="Q0T8V0"/>
<dbReference type="KEGG" id="ecp:ECP_4693"/>
<dbReference type="HOGENOM" id="CLU_1501592_0_0_6"/>
<dbReference type="Proteomes" id="UP000009182">
    <property type="component" value="Chromosome"/>
</dbReference>
<dbReference type="GO" id="GO:1990077">
    <property type="term" value="C:primosome complex"/>
    <property type="evidence" value="ECO:0007669"/>
    <property type="project" value="UniProtKB-KW"/>
</dbReference>
<dbReference type="GO" id="GO:0006269">
    <property type="term" value="P:DNA replication, synthesis of primer"/>
    <property type="evidence" value="ECO:0007669"/>
    <property type="project" value="UniProtKB-UniRule"/>
</dbReference>
<dbReference type="Gene3D" id="1.10.8.1180">
    <property type="match status" value="1"/>
</dbReference>
<dbReference type="HAMAP" id="MF_01061">
    <property type="entry name" value="DnaT"/>
    <property type="match status" value="1"/>
</dbReference>
<dbReference type="InterPro" id="IPR020917">
    <property type="entry name" value="DnaT"/>
</dbReference>
<dbReference type="InterPro" id="IPR040480">
    <property type="entry name" value="DnaT_DNA_bind"/>
</dbReference>
<dbReference type="NCBIfam" id="NF002770">
    <property type="entry name" value="PRK02854.1"/>
    <property type="match status" value="1"/>
</dbReference>
<dbReference type="Pfam" id="PF17948">
    <property type="entry name" value="DnaT"/>
    <property type="match status" value="1"/>
</dbReference>
<name>DNAT_ECOL5</name>
<evidence type="ECO:0000255" key="1">
    <source>
        <dbReference type="HAMAP-Rule" id="MF_01061"/>
    </source>
</evidence>
<evidence type="ECO:0000256" key="2">
    <source>
        <dbReference type="SAM" id="MobiDB-lite"/>
    </source>
</evidence>
<organism>
    <name type="scientific">Escherichia coli O6:K15:H31 (strain 536 / UPEC)</name>
    <dbReference type="NCBI Taxonomy" id="362663"/>
    <lineage>
        <taxon>Bacteria</taxon>
        <taxon>Pseudomonadati</taxon>
        <taxon>Pseudomonadota</taxon>
        <taxon>Gammaproteobacteria</taxon>
        <taxon>Enterobacterales</taxon>
        <taxon>Enterobacteriaceae</taxon>
        <taxon>Escherichia</taxon>
    </lineage>
</organism>
<gene>
    <name evidence="1" type="primary">dnaT</name>
    <name type="ordered locus">ECP_4693</name>
</gene>